<name>FABP8_CAEEL</name>
<keyword id="KW-0002">3D-structure</keyword>
<keyword id="KW-0446">Lipid-binding</keyword>
<keyword id="KW-0458">Lysosome</keyword>
<keyword id="KW-0539">Nucleus</keyword>
<keyword id="KW-1185">Reference proteome</keyword>
<keyword id="KW-0813">Transport</keyword>
<feature type="chain" id="PRO_0000450342" description="Fatty acid-binding protein homolog 8">
    <location>
        <begin position="1"/>
        <end position="137"/>
    </location>
</feature>
<feature type="short sequence motif" description="Nuclear localization signal" evidence="1">
    <location>
        <begin position="24"/>
        <end position="34"/>
    </location>
</feature>
<feature type="helix" evidence="10">
    <location>
        <begin position="4"/>
        <end position="7"/>
    </location>
</feature>
<feature type="strand" evidence="10">
    <location>
        <begin position="9"/>
        <end position="18"/>
    </location>
</feature>
<feature type="helix" evidence="10">
    <location>
        <begin position="19"/>
        <end position="26"/>
    </location>
</feature>
<feature type="helix" evidence="10">
    <location>
        <begin position="30"/>
        <end position="38"/>
    </location>
</feature>
<feature type="strand" evidence="10">
    <location>
        <begin position="42"/>
        <end position="48"/>
    </location>
</feature>
<feature type="strand" evidence="10">
    <location>
        <begin position="51"/>
        <end position="57"/>
    </location>
</feature>
<feature type="strand" evidence="10">
    <location>
        <begin position="63"/>
        <end position="67"/>
    </location>
</feature>
<feature type="strand" evidence="10">
    <location>
        <begin position="73"/>
        <end position="76"/>
    </location>
</feature>
<feature type="strand" evidence="10">
    <location>
        <begin position="82"/>
        <end position="90"/>
    </location>
</feature>
<feature type="strand" evidence="10">
    <location>
        <begin position="93"/>
        <end position="102"/>
    </location>
</feature>
<feature type="strand" evidence="10">
    <location>
        <begin position="108"/>
        <end position="115"/>
    </location>
</feature>
<feature type="strand" evidence="10">
    <location>
        <begin position="118"/>
        <end position="125"/>
    </location>
</feature>
<feature type="strand" evidence="10">
    <location>
        <begin position="128"/>
        <end position="136"/>
    </location>
</feature>
<evidence type="ECO:0000250" key="1">
    <source>
        <dbReference type="UniProtKB" id="Q01469"/>
    </source>
</evidence>
<evidence type="ECO:0000255" key="2">
    <source>
        <dbReference type="RuleBase" id="RU003696"/>
    </source>
</evidence>
<evidence type="ECO:0000269" key="3">
    <source>
    </source>
</evidence>
<evidence type="ECO:0000269" key="4">
    <source>
    </source>
</evidence>
<evidence type="ECO:0000269" key="5">
    <source>
    </source>
</evidence>
<evidence type="ECO:0000305" key="6"/>
<evidence type="ECO:0000312" key="7">
    <source>
        <dbReference type="Proteomes" id="UP000001940"/>
    </source>
</evidence>
<evidence type="ECO:0000312" key="8">
    <source>
        <dbReference type="WormBase" id="T22G5.6"/>
    </source>
</evidence>
<evidence type="ECO:0007744" key="9">
    <source>
        <dbReference type="PDB" id="6C1Z"/>
    </source>
</evidence>
<evidence type="ECO:0007829" key="10">
    <source>
        <dbReference type="PDB" id="6C1Z"/>
    </source>
</evidence>
<reference evidence="7" key="1">
    <citation type="journal article" date="1998" name="Science">
        <title>Genome sequence of the nematode C. elegans: a platform for investigating biology.</title>
        <authorList>
            <consortium name="The C. elegans sequencing consortium"/>
        </authorList>
    </citation>
    <scope>NUCLEOTIDE SEQUENCE [LARGE SCALE GENOMIC DNA]</scope>
    <source>
        <strain evidence="7">Bristol N2</strain>
    </source>
</reference>
<reference evidence="6" key="2">
    <citation type="journal article" date="2015" name="Science">
        <title>Lysosomal signaling molecules regulate longevity in Caenorhabditis elegans.</title>
        <authorList>
            <person name="Folick A."/>
            <person name="Oakley H.D."/>
            <person name="Yu Y."/>
            <person name="Armstrong E.H."/>
            <person name="Kumari M."/>
            <person name="Sanor L."/>
            <person name="Moore D.D."/>
            <person name="Ortlund E.A."/>
            <person name="Zechner R."/>
            <person name="Wang M.C."/>
        </authorList>
    </citation>
    <scope>FUNCTION</scope>
    <scope>SUBCELLULAR LOCATION</scope>
    <scope>TISSUE SPECIFICITY</scope>
</reference>
<reference evidence="6" key="3">
    <citation type="journal article" date="2019" name="Dev. Cell">
        <title>Lysosomal Signaling Promotes Longevity by Adjusting Mitochondrial Activity.</title>
        <authorList>
            <person name="Ramachandran P.V."/>
            <person name="Savini M."/>
            <person name="Folick A.K."/>
            <person name="Hu K."/>
            <person name="Masand R."/>
            <person name="Graham B.H."/>
            <person name="Wang M.C."/>
        </authorList>
    </citation>
    <scope>FUNCTION</scope>
</reference>
<reference evidence="9" key="4">
    <citation type="journal article" date="2019" name="Sci. Rep.">
        <title>Structural characterization of life-extending Caenorhabditis elegans Lipid Binding Protein 8.</title>
        <authorList>
            <person name="Tillman M.C."/>
            <person name="Khadka M."/>
            <person name="Duffy J."/>
            <person name="Wang M.C."/>
            <person name="Ortlund E.A."/>
        </authorList>
    </citation>
    <scope>X-RAY CRYSTALLOGRAPHY (1.30 ANGSTROMS)</scope>
    <scope>FUNCTION</scope>
    <scope>SUBUNIT</scope>
</reference>
<dbReference type="EMBL" id="BX284605">
    <property type="protein sequence ID" value="CAB03391.2"/>
    <property type="molecule type" value="Genomic_DNA"/>
</dbReference>
<dbReference type="PIR" id="T25127">
    <property type="entry name" value="T25127"/>
</dbReference>
<dbReference type="RefSeq" id="NP_506444.2">
    <property type="nucleotide sequence ID" value="NM_074043.6"/>
</dbReference>
<dbReference type="PDB" id="6C1Z">
    <property type="method" value="X-ray"/>
    <property type="resolution" value="1.30 A"/>
    <property type="chains" value="A=1-137"/>
</dbReference>
<dbReference type="PDBsum" id="6C1Z"/>
<dbReference type="SMR" id="O02324"/>
<dbReference type="FunCoup" id="O02324">
    <property type="interactions" value="127"/>
</dbReference>
<dbReference type="STRING" id="6239.T22G5.6.1"/>
<dbReference type="PaxDb" id="6239-T22G5.6"/>
<dbReference type="PeptideAtlas" id="O02324"/>
<dbReference type="EnsemblMetazoa" id="T22G5.6.1">
    <property type="protein sequence ID" value="T22G5.6.1"/>
    <property type="gene ID" value="WBGene00002260"/>
</dbReference>
<dbReference type="GeneID" id="188761"/>
<dbReference type="KEGG" id="cel:CELE_T22G5.6"/>
<dbReference type="UCSC" id="T22G5.6">
    <property type="organism name" value="c. elegans"/>
</dbReference>
<dbReference type="AGR" id="WB:WBGene00002260"/>
<dbReference type="CTD" id="188761"/>
<dbReference type="WormBase" id="T22G5.6">
    <property type="protein sequence ID" value="CE41159"/>
    <property type="gene ID" value="WBGene00002260"/>
    <property type="gene designation" value="lbp-8"/>
</dbReference>
<dbReference type="eggNOG" id="KOG4015">
    <property type="taxonomic scope" value="Eukaryota"/>
</dbReference>
<dbReference type="GeneTree" id="ENSGT00970000196311"/>
<dbReference type="HOGENOM" id="CLU_113772_0_1_1"/>
<dbReference type="InParanoid" id="O02324"/>
<dbReference type="OMA" id="LTAKCIM"/>
<dbReference type="OrthoDB" id="354351at2759"/>
<dbReference type="PhylomeDB" id="O02324"/>
<dbReference type="Reactome" id="R-CEL-159418">
    <property type="pathway name" value="Recycling of bile acids and salts"/>
</dbReference>
<dbReference type="Reactome" id="R-CEL-163560">
    <property type="pathway name" value="Triglyceride catabolism"/>
</dbReference>
<dbReference type="Reactome" id="R-CEL-189483">
    <property type="pathway name" value="Heme degradation"/>
</dbReference>
<dbReference type="Reactome" id="R-CEL-2453902">
    <property type="pathway name" value="The canonical retinoid cycle in rods (twilight vision)"/>
</dbReference>
<dbReference type="Reactome" id="R-CEL-5362517">
    <property type="pathway name" value="Signaling by Retinoic Acid"/>
</dbReference>
<dbReference type="Reactome" id="R-CEL-975634">
    <property type="pathway name" value="Retinoid metabolism and transport"/>
</dbReference>
<dbReference type="PRO" id="PR:O02324"/>
<dbReference type="Proteomes" id="UP000001940">
    <property type="component" value="Chromosome V"/>
</dbReference>
<dbReference type="Bgee" id="WBGene00002260">
    <property type="expression patterns" value="Expressed in adult organism and 1 other cell type or tissue"/>
</dbReference>
<dbReference type="GO" id="GO:0005829">
    <property type="term" value="C:cytosol"/>
    <property type="evidence" value="ECO:0000318"/>
    <property type="project" value="GO_Central"/>
</dbReference>
<dbReference type="GO" id="GO:0005764">
    <property type="term" value="C:lysosome"/>
    <property type="evidence" value="ECO:0000314"/>
    <property type="project" value="UniProtKB"/>
</dbReference>
<dbReference type="GO" id="GO:0005634">
    <property type="term" value="C:nucleus"/>
    <property type="evidence" value="ECO:0000314"/>
    <property type="project" value="UniProtKB"/>
</dbReference>
<dbReference type="GO" id="GO:0005504">
    <property type="term" value="F:fatty acid binding"/>
    <property type="evidence" value="ECO:0000318"/>
    <property type="project" value="GO_Central"/>
</dbReference>
<dbReference type="GO" id="GO:0008289">
    <property type="term" value="F:lipid binding"/>
    <property type="evidence" value="ECO:0000304"/>
    <property type="project" value="WormBase"/>
</dbReference>
<dbReference type="GO" id="GO:0036041">
    <property type="term" value="F:long-chain fatty acid binding"/>
    <property type="evidence" value="ECO:0000314"/>
    <property type="project" value="UniProtKB"/>
</dbReference>
<dbReference type="GO" id="GO:0005324">
    <property type="term" value="F:long-chain fatty acid transmembrane transporter activity"/>
    <property type="evidence" value="ECO:0000315"/>
    <property type="project" value="UniProtKB"/>
</dbReference>
<dbReference type="GO" id="GO:0070538">
    <property type="term" value="F:oleic acid binding"/>
    <property type="evidence" value="ECO:0000314"/>
    <property type="project" value="UniProtKB"/>
</dbReference>
<dbReference type="GO" id="GO:0015908">
    <property type="term" value="P:fatty acid transport"/>
    <property type="evidence" value="ECO:0000318"/>
    <property type="project" value="GO_Central"/>
</dbReference>
<dbReference type="GO" id="GO:0006869">
    <property type="term" value="P:lipid transport"/>
    <property type="evidence" value="ECO:0000304"/>
    <property type="project" value="WormBase"/>
</dbReference>
<dbReference type="GO" id="GO:0015909">
    <property type="term" value="P:long-chain fatty acid transport"/>
    <property type="evidence" value="ECO:0000315"/>
    <property type="project" value="UniProtKB"/>
</dbReference>
<dbReference type="CDD" id="cd00742">
    <property type="entry name" value="FABP"/>
    <property type="match status" value="1"/>
</dbReference>
<dbReference type="FunFam" id="2.40.128.20:FF:000001">
    <property type="entry name" value="Fatty acid-binding protein, adipocyte"/>
    <property type="match status" value="1"/>
</dbReference>
<dbReference type="Gene3D" id="2.40.128.20">
    <property type="match status" value="1"/>
</dbReference>
<dbReference type="InterPro" id="IPR012674">
    <property type="entry name" value="Calycin"/>
</dbReference>
<dbReference type="InterPro" id="IPR000463">
    <property type="entry name" value="Fatty_acid-bd"/>
</dbReference>
<dbReference type="InterPro" id="IPR031259">
    <property type="entry name" value="ILBP"/>
</dbReference>
<dbReference type="PANTHER" id="PTHR11955">
    <property type="entry name" value="FATTY ACID BINDING PROTEIN"/>
    <property type="match status" value="1"/>
</dbReference>
<dbReference type="PRINTS" id="PR00178">
    <property type="entry name" value="FATTYACIDBP"/>
</dbReference>
<dbReference type="SUPFAM" id="SSF50814">
    <property type="entry name" value="Lipocalins"/>
    <property type="match status" value="1"/>
</dbReference>
<dbReference type="PROSITE" id="PS00214">
    <property type="entry name" value="FABP"/>
    <property type="match status" value="1"/>
</dbReference>
<accession>O02324</accession>
<organism evidence="7">
    <name type="scientific">Caenorhabditis elegans</name>
    <dbReference type="NCBI Taxonomy" id="6239"/>
    <lineage>
        <taxon>Eukaryota</taxon>
        <taxon>Metazoa</taxon>
        <taxon>Ecdysozoa</taxon>
        <taxon>Nematoda</taxon>
        <taxon>Chromadorea</taxon>
        <taxon>Rhabditida</taxon>
        <taxon>Rhabditina</taxon>
        <taxon>Rhabditomorpha</taxon>
        <taxon>Rhabditoidea</taxon>
        <taxon>Rhabditidae</taxon>
        <taxon>Peloderinae</taxon>
        <taxon>Caenorhabditis</taxon>
    </lineage>
</organism>
<gene>
    <name evidence="8" type="primary">lbp-8</name>
    <name evidence="8" type="ORF">T22G5.6</name>
</gene>
<protein>
    <recommendedName>
        <fullName evidence="6">Fatty acid-binding protein homolog 8</fullName>
    </recommendedName>
</protein>
<sequence length="137" mass="16092">MVSMKEFIGRWKLVHSENFEEYLKEIGVGLLIRKAASLTSPTLEIKLDGDTWHFNQYSTFKNNKLAFKIREKFVEIAPDERSYNTLVTFENGKFISHQDKIKENHHSSVFTTWLENGKLLQTYQSGSVICRREFVKE</sequence>
<proteinExistence type="evidence at protein level"/>
<comment type="function">
    <text evidence="3 4 5">Lysosomal lipid chaperone which binds to a wide range of unsaturated fatty acids, including high affinity binding to oleic acid and oleoylethanolamide, to transport them into the nucleus (PubMed:25554789, PubMed:31292465). As part of a lysosome-to-nucleus retrograde lipid signaling pathway, translocates into the nucleus where it activates the transcription of genes promoting longevity and activation of mitochondrial beta oxidation (PubMed:25554789, PubMed:30713071).</text>
</comment>
<comment type="subunit">
    <text evidence="5">Monomer.</text>
</comment>
<comment type="subcellular location">
    <subcellularLocation>
        <location evidence="3">Lysosome</location>
    </subcellularLocation>
    <subcellularLocation>
        <location evidence="3">Nucleus</location>
    </subcellularLocation>
</comment>
<comment type="tissue specificity">
    <text evidence="3">Intestine.</text>
</comment>
<comment type="similarity">
    <text evidence="2">Belongs to the calycin superfamily. Fatty-acid binding protein (FABP) family.</text>
</comment>